<sequence length="686" mass="76693">MKALLFLLTLFLILPNPISAIDFIFNGFNDSSSNVSLFGIATIESKILTLTNQTSFATGRALYNRTIRTKDPITSSVLPFSTSFIFTMAPYKNTLPGHGIVFLFAPSTGINGSSSAQHLGLFNLTNNGNPSNHIFGVEFDVFANQEFSDIDANHVGIDVNSLHSVYSNTSGYWSDDGVVFKPLKLNDGRNYQVWIDYRDFVVNVTMQVAGKIRPKIPLLSTSLNLSDVVEDEMFVGFTAATGRLVQSHKILAWSFSNSNFSLSNSLITTGLPSFVLPKDSIVKAKWFVFVLVLICFLVVALVGLVLFAVVRKRLERARKRALMEDWEMEYWPHRIPYEEIESGTKGFDEKNVIGIGGNGKVYKGLLQGGVVEVAVKRISQESSDGMREFVAEISSLGRLKHRNLVSLRGWCKKEVGSFMLVYDYMENGSLDRWIFENDEKITTLSCEERIRILKGVASGILYLHEGWESKVLHRDIKASNVLLDRDMIPRLSDFGLARVHGHEQPVRTTRVVGTAGYLAPEVVKTGRASTQTDVFAYGILVLEVMCGRRPIEEGKKPLMDWVWGLMERGEILNGLDPQMMMTQGVTEVIDEAERVLQLGLLCAHPDPAKRPSMRQVVQVFEGDKAEIFEAESSEDVESWMLMKMGSRGSSREFWYGSSSHPTIEQIRLQSLSVSLSSWNSSILEGR</sequence>
<reference key="1">
    <citation type="journal article" date="1999" name="Nature">
        <title>Sequence and analysis of chromosome 4 of the plant Arabidopsis thaliana.</title>
        <authorList>
            <person name="Mayer K.F.X."/>
            <person name="Schueller C."/>
            <person name="Wambutt R."/>
            <person name="Murphy G."/>
            <person name="Volckaert G."/>
            <person name="Pohl T."/>
            <person name="Duesterhoeft A."/>
            <person name="Stiekema W."/>
            <person name="Entian K.-D."/>
            <person name="Terryn N."/>
            <person name="Harris B."/>
            <person name="Ansorge W."/>
            <person name="Brandt P."/>
            <person name="Grivell L.A."/>
            <person name="Rieger M."/>
            <person name="Weichselgartner M."/>
            <person name="de Simone V."/>
            <person name="Obermaier B."/>
            <person name="Mache R."/>
            <person name="Mueller M."/>
            <person name="Kreis M."/>
            <person name="Delseny M."/>
            <person name="Puigdomenech P."/>
            <person name="Watson M."/>
            <person name="Schmidtheini T."/>
            <person name="Reichert B."/>
            <person name="Portetelle D."/>
            <person name="Perez-Alonso M."/>
            <person name="Boutry M."/>
            <person name="Bancroft I."/>
            <person name="Vos P."/>
            <person name="Hoheisel J."/>
            <person name="Zimmermann W."/>
            <person name="Wedler H."/>
            <person name="Ridley P."/>
            <person name="Langham S.-A."/>
            <person name="McCullagh B."/>
            <person name="Bilham L."/>
            <person name="Robben J."/>
            <person name="van der Schueren J."/>
            <person name="Grymonprez B."/>
            <person name="Chuang Y.-J."/>
            <person name="Vandenbussche F."/>
            <person name="Braeken M."/>
            <person name="Weltjens I."/>
            <person name="Voet M."/>
            <person name="Bastiaens I."/>
            <person name="Aert R."/>
            <person name="Defoor E."/>
            <person name="Weitzenegger T."/>
            <person name="Bothe G."/>
            <person name="Ramsperger U."/>
            <person name="Hilbert H."/>
            <person name="Braun M."/>
            <person name="Holzer E."/>
            <person name="Brandt A."/>
            <person name="Peters S."/>
            <person name="van Staveren M."/>
            <person name="Dirkse W."/>
            <person name="Mooijman P."/>
            <person name="Klein Lankhorst R."/>
            <person name="Rose M."/>
            <person name="Hauf J."/>
            <person name="Koetter P."/>
            <person name="Berneiser S."/>
            <person name="Hempel S."/>
            <person name="Feldpausch M."/>
            <person name="Lamberth S."/>
            <person name="Van den Daele H."/>
            <person name="De Keyser A."/>
            <person name="Buysshaert C."/>
            <person name="Gielen J."/>
            <person name="Villarroel R."/>
            <person name="De Clercq R."/>
            <person name="van Montagu M."/>
            <person name="Rogers J."/>
            <person name="Cronin A."/>
            <person name="Quail M.A."/>
            <person name="Bray-Allen S."/>
            <person name="Clark L."/>
            <person name="Doggett J."/>
            <person name="Hall S."/>
            <person name="Kay M."/>
            <person name="Lennard N."/>
            <person name="McLay K."/>
            <person name="Mayes R."/>
            <person name="Pettett A."/>
            <person name="Rajandream M.A."/>
            <person name="Lyne M."/>
            <person name="Benes V."/>
            <person name="Rechmann S."/>
            <person name="Borkova D."/>
            <person name="Bloecker H."/>
            <person name="Scharfe M."/>
            <person name="Grimm M."/>
            <person name="Loehnert T.-H."/>
            <person name="Dose S."/>
            <person name="de Haan M."/>
            <person name="Maarse A.C."/>
            <person name="Schaefer M."/>
            <person name="Mueller-Auer S."/>
            <person name="Gabel C."/>
            <person name="Fuchs M."/>
            <person name="Fartmann B."/>
            <person name="Granderath K."/>
            <person name="Dauner D."/>
            <person name="Herzl A."/>
            <person name="Neumann S."/>
            <person name="Argiriou A."/>
            <person name="Vitale D."/>
            <person name="Liguori R."/>
            <person name="Piravandi E."/>
            <person name="Massenet O."/>
            <person name="Quigley F."/>
            <person name="Clabauld G."/>
            <person name="Muendlein A."/>
            <person name="Felber R."/>
            <person name="Schnabl S."/>
            <person name="Hiller R."/>
            <person name="Schmidt W."/>
            <person name="Lecharny A."/>
            <person name="Aubourg S."/>
            <person name="Chefdor F."/>
            <person name="Cooke R."/>
            <person name="Berger C."/>
            <person name="Monfort A."/>
            <person name="Casacuberta E."/>
            <person name="Gibbons T."/>
            <person name="Weber N."/>
            <person name="Vandenbol M."/>
            <person name="Bargues M."/>
            <person name="Terol J."/>
            <person name="Torres A."/>
            <person name="Perez-Perez A."/>
            <person name="Purnelle B."/>
            <person name="Bent E."/>
            <person name="Johnson S."/>
            <person name="Tacon D."/>
            <person name="Jesse T."/>
            <person name="Heijnen L."/>
            <person name="Schwarz S."/>
            <person name="Scholler P."/>
            <person name="Heber S."/>
            <person name="Francs P."/>
            <person name="Bielke C."/>
            <person name="Frishman D."/>
            <person name="Haase D."/>
            <person name="Lemcke K."/>
            <person name="Mewes H.-W."/>
            <person name="Stocker S."/>
            <person name="Zaccaria P."/>
            <person name="Bevan M."/>
            <person name="Wilson R.K."/>
            <person name="de la Bastide M."/>
            <person name="Habermann K."/>
            <person name="Parnell L."/>
            <person name="Dedhia N."/>
            <person name="Gnoj L."/>
            <person name="Schutz K."/>
            <person name="Huang E."/>
            <person name="Spiegel L."/>
            <person name="Sekhon M."/>
            <person name="Murray J."/>
            <person name="Sheet P."/>
            <person name="Cordes M."/>
            <person name="Abu-Threideh J."/>
            <person name="Stoneking T."/>
            <person name="Kalicki J."/>
            <person name="Graves T."/>
            <person name="Harmon G."/>
            <person name="Edwards J."/>
            <person name="Latreille P."/>
            <person name="Courtney L."/>
            <person name="Cloud J."/>
            <person name="Abbott A."/>
            <person name="Scott K."/>
            <person name="Johnson D."/>
            <person name="Minx P."/>
            <person name="Bentley D."/>
            <person name="Fulton B."/>
            <person name="Miller N."/>
            <person name="Greco T."/>
            <person name="Kemp K."/>
            <person name="Kramer J."/>
            <person name="Fulton L."/>
            <person name="Mardis E."/>
            <person name="Dante M."/>
            <person name="Pepin K."/>
            <person name="Hillier L.W."/>
            <person name="Nelson J."/>
            <person name="Spieth J."/>
            <person name="Ryan E."/>
            <person name="Andrews S."/>
            <person name="Geisel C."/>
            <person name="Layman D."/>
            <person name="Du H."/>
            <person name="Ali J."/>
            <person name="Berghoff A."/>
            <person name="Jones K."/>
            <person name="Drone K."/>
            <person name="Cotton M."/>
            <person name="Joshu C."/>
            <person name="Antonoiu B."/>
            <person name="Zidanic M."/>
            <person name="Strong C."/>
            <person name="Sun H."/>
            <person name="Lamar B."/>
            <person name="Yordan C."/>
            <person name="Ma P."/>
            <person name="Zhong J."/>
            <person name="Preston R."/>
            <person name="Vil D."/>
            <person name="Shekher M."/>
            <person name="Matero A."/>
            <person name="Shah R."/>
            <person name="Swaby I.K."/>
            <person name="O'Shaughnessy A."/>
            <person name="Rodriguez M."/>
            <person name="Hoffman J."/>
            <person name="Till S."/>
            <person name="Granat S."/>
            <person name="Shohdy N."/>
            <person name="Hasegawa A."/>
            <person name="Hameed A."/>
            <person name="Lodhi M."/>
            <person name="Johnson A."/>
            <person name="Chen E."/>
            <person name="Marra M.A."/>
            <person name="Martienssen R."/>
            <person name="McCombie W.R."/>
        </authorList>
    </citation>
    <scope>NUCLEOTIDE SEQUENCE [LARGE SCALE GENOMIC DNA]</scope>
    <source>
        <strain>cv. Columbia</strain>
    </source>
</reference>
<reference key="2">
    <citation type="journal article" date="2017" name="Plant J.">
        <title>Araport11: a complete reannotation of the Arabidopsis thaliana reference genome.</title>
        <authorList>
            <person name="Cheng C.Y."/>
            <person name="Krishnakumar V."/>
            <person name="Chan A.P."/>
            <person name="Thibaud-Nissen F."/>
            <person name="Schobel S."/>
            <person name="Town C.D."/>
        </authorList>
    </citation>
    <scope>GENOME REANNOTATION</scope>
    <source>
        <strain>cv. Columbia</strain>
    </source>
</reference>
<reference key="3">
    <citation type="journal article" date="2003" name="Science">
        <title>Empirical analysis of transcriptional activity in the Arabidopsis genome.</title>
        <authorList>
            <person name="Yamada K."/>
            <person name="Lim J."/>
            <person name="Dale J.M."/>
            <person name="Chen H."/>
            <person name="Shinn P."/>
            <person name="Palm C.J."/>
            <person name="Southwick A.M."/>
            <person name="Wu H.C."/>
            <person name="Kim C.J."/>
            <person name="Nguyen M."/>
            <person name="Pham P.K."/>
            <person name="Cheuk R.F."/>
            <person name="Karlin-Newmann G."/>
            <person name="Liu S.X."/>
            <person name="Lam B."/>
            <person name="Sakano H."/>
            <person name="Wu T."/>
            <person name="Yu G."/>
            <person name="Miranda M."/>
            <person name="Quach H.L."/>
            <person name="Tripp M."/>
            <person name="Chang C.H."/>
            <person name="Lee J.M."/>
            <person name="Toriumi M.J."/>
            <person name="Chan M.M."/>
            <person name="Tang C.C."/>
            <person name="Onodera C.S."/>
            <person name="Deng J.M."/>
            <person name="Akiyama K."/>
            <person name="Ansari Y."/>
            <person name="Arakawa T."/>
            <person name="Banh J."/>
            <person name="Banno F."/>
            <person name="Bowser L."/>
            <person name="Brooks S.Y."/>
            <person name="Carninci P."/>
            <person name="Chao Q."/>
            <person name="Choy N."/>
            <person name="Enju A."/>
            <person name="Goldsmith A.D."/>
            <person name="Gurjal M."/>
            <person name="Hansen N.F."/>
            <person name="Hayashizaki Y."/>
            <person name="Johnson-Hopson C."/>
            <person name="Hsuan V.W."/>
            <person name="Iida K."/>
            <person name="Karnes M."/>
            <person name="Khan S."/>
            <person name="Koesema E."/>
            <person name="Ishida J."/>
            <person name="Jiang P.X."/>
            <person name="Jones T."/>
            <person name="Kawai J."/>
            <person name="Kamiya A."/>
            <person name="Meyers C."/>
            <person name="Nakajima M."/>
            <person name="Narusaka M."/>
            <person name="Seki M."/>
            <person name="Sakurai T."/>
            <person name="Satou M."/>
            <person name="Tamse R."/>
            <person name="Vaysberg M."/>
            <person name="Wallender E.K."/>
            <person name="Wong C."/>
            <person name="Yamamura Y."/>
            <person name="Yuan S."/>
            <person name="Shinozaki K."/>
            <person name="Davis R.W."/>
            <person name="Theologis A."/>
            <person name="Ecker J.R."/>
        </authorList>
    </citation>
    <scope>NUCLEOTIDE SEQUENCE [LARGE SCALE MRNA]</scope>
    <source>
        <strain>cv. Columbia</strain>
    </source>
</reference>
<reference key="4">
    <citation type="submission" date="2006-07" db="EMBL/GenBank/DDBJ databases">
        <title>Large-scale analysis of RIKEN Arabidopsis full-length (RAFL) cDNAs.</title>
        <authorList>
            <person name="Totoki Y."/>
            <person name="Seki M."/>
            <person name="Ishida J."/>
            <person name="Nakajima M."/>
            <person name="Enju A."/>
            <person name="Kamiya A."/>
            <person name="Narusaka M."/>
            <person name="Shin-i T."/>
            <person name="Nakagawa M."/>
            <person name="Sakamoto N."/>
            <person name="Oishi K."/>
            <person name="Kohara Y."/>
            <person name="Kobayashi M."/>
            <person name="Toyoda A."/>
            <person name="Sakaki Y."/>
            <person name="Sakurai T."/>
            <person name="Iida K."/>
            <person name="Akiyama K."/>
            <person name="Satou M."/>
            <person name="Toyoda T."/>
            <person name="Konagaya A."/>
            <person name="Carninci P."/>
            <person name="Kawai J."/>
            <person name="Hayashizaki Y."/>
            <person name="Shinozaki K."/>
        </authorList>
    </citation>
    <scope>NUCLEOTIDE SEQUENCE [LARGE SCALE MRNA]</scope>
    <source>
        <strain>cv. Columbia</strain>
    </source>
</reference>
<reference key="5">
    <citation type="journal article" date="2002" name="Crit. Rev. Plant Sci.">
        <title>Lectin receptor kinases in plants.</title>
        <authorList>
            <person name="Barre A."/>
            <person name="Herve C."/>
            <person name="Lescure B."/>
            <person name="Rouge P."/>
        </authorList>
    </citation>
    <scope>GENE FAMILY</scope>
</reference>
<reference key="6">
    <citation type="journal article" date="2009" name="J. Exp. Bot.">
        <title>Arabidopsis L-type lectin receptor kinases: phylogeny, classification, and expression profiles.</title>
        <authorList>
            <person name="Bouwmeester K."/>
            <person name="Govers F."/>
        </authorList>
    </citation>
    <scope>GENE FAMILY</scope>
    <scope>NOMENCLATURE</scope>
</reference>
<comment type="catalytic activity">
    <reaction>
        <text>L-seryl-[protein] + ATP = O-phospho-L-seryl-[protein] + ADP + H(+)</text>
        <dbReference type="Rhea" id="RHEA:17989"/>
        <dbReference type="Rhea" id="RHEA-COMP:9863"/>
        <dbReference type="Rhea" id="RHEA-COMP:11604"/>
        <dbReference type="ChEBI" id="CHEBI:15378"/>
        <dbReference type="ChEBI" id="CHEBI:29999"/>
        <dbReference type="ChEBI" id="CHEBI:30616"/>
        <dbReference type="ChEBI" id="CHEBI:83421"/>
        <dbReference type="ChEBI" id="CHEBI:456216"/>
        <dbReference type="EC" id="2.7.11.1"/>
    </reaction>
</comment>
<comment type="catalytic activity">
    <reaction>
        <text>L-threonyl-[protein] + ATP = O-phospho-L-threonyl-[protein] + ADP + H(+)</text>
        <dbReference type="Rhea" id="RHEA:46608"/>
        <dbReference type="Rhea" id="RHEA-COMP:11060"/>
        <dbReference type="Rhea" id="RHEA-COMP:11605"/>
        <dbReference type="ChEBI" id="CHEBI:15378"/>
        <dbReference type="ChEBI" id="CHEBI:30013"/>
        <dbReference type="ChEBI" id="CHEBI:30616"/>
        <dbReference type="ChEBI" id="CHEBI:61977"/>
        <dbReference type="ChEBI" id="CHEBI:456216"/>
        <dbReference type="EC" id="2.7.11.1"/>
    </reaction>
</comment>
<comment type="subcellular location">
    <subcellularLocation>
        <location evidence="1">Cell membrane</location>
        <topology evidence="1">Single-pass type I membrane protein</topology>
    </subcellularLocation>
</comment>
<comment type="similarity">
    <text evidence="5">In the C-terminal section; belongs to the protein kinase superfamily. Ser/Thr protein kinase family.</text>
</comment>
<comment type="similarity">
    <text evidence="5">In the N-terminal section; belongs to the leguminous lectin family.</text>
</comment>
<gene>
    <name type="primary">LECRK71</name>
    <name type="ordered locus">At4g04960</name>
    <name type="ORF">T32N4.9</name>
</gene>
<keyword id="KW-0067">ATP-binding</keyword>
<keyword id="KW-1003">Cell membrane</keyword>
<keyword id="KW-0325">Glycoprotein</keyword>
<keyword id="KW-0418">Kinase</keyword>
<keyword id="KW-0430">Lectin</keyword>
<keyword id="KW-0472">Membrane</keyword>
<keyword id="KW-0547">Nucleotide-binding</keyword>
<keyword id="KW-0675">Receptor</keyword>
<keyword id="KW-1185">Reference proteome</keyword>
<keyword id="KW-0723">Serine/threonine-protein kinase</keyword>
<keyword id="KW-0732">Signal</keyword>
<keyword id="KW-0808">Transferase</keyword>
<keyword id="KW-0812">Transmembrane</keyword>
<keyword id="KW-1133">Transmembrane helix</keyword>
<protein>
    <recommendedName>
        <fullName>L-type lectin-domain containing receptor kinase VII.1</fullName>
        <shortName>LecRK-VII.1</shortName>
        <ecNumber>2.7.11.1</ecNumber>
    </recommendedName>
</protein>
<organism>
    <name type="scientific">Arabidopsis thaliana</name>
    <name type="common">Mouse-ear cress</name>
    <dbReference type="NCBI Taxonomy" id="3702"/>
    <lineage>
        <taxon>Eukaryota</taxon>
        <taxon>Viridiplantae</taxon>
        <taxon>Streptophyta</taxon>
        <taxon>Embryophyta</taxon>
        <taxon>Tracheophyta</taxon>
        <taxon>Spermatophyta</taxon>
        <taxon>Magnoliopsida</taxon>
        <taxon>eudicotyledons</taxon>
        <taxon>Gunneridae</taxon>
        <taxon>Pentapetalae</taxon>
        <taxon>rosids</taxon>
        <taxon>malvids</taxon>
        <taxon>Brassicales</taxon>
        <taxon>Brassicaceae</taxon>
        <taxon>Camelineae</taxon>
        <taxon>Arabidopsis</taxon>
    </lineage>
</organism>
<dbReference type="EC" id="2.7.11.1"/>
<dbReference type="EMBL" id="AF162444">
    <property type="protein sequence ID" value="AAD48977.1"/>
    <property type="molecule type" value="Genomic_DNA"/>
</dbReference>
<dbReference type="EMBL" id="AL161502">
    <property type="protein sequence ID" value="CAB81038.1"/>
    <property type="molecule type" value="Genomic_DNA"/>
</dbReference>
<dbReference type="EMBL" id="CP002687">
    <property type="protein sequence ID" value="AEE82450.1"/>
    <property type="molecule type" value="Genomic_DNA"/>
</dbReference>
<dbReference type="EMBL" id="BT008663">
    <property type="protein sequence ID" value="AAP40475.1"/>
    <property type="molecule type" value="mRNA"/>
</dbReference>
<dbReference type="EMBL" id="AK222063">
    <property type="protein sequence ID" value="BAD94865.1"/>
    <property type="molecule type" value="mRNA"/>
</dbReference>
<dbReference type="EMBL" id="AK229495">
    <property type="protein sequence ID" value="BAF01352.1"/>
    <property type="molecule type" value="mRNA"/>
</dbReference>
<dbReference type="PIR" id="D85062">
    <property type="entry name" value="D85062"/>
</dbReference>
<dbReference type="RefSeq" id="NP_567277.1">
    <property type="nucleotide sequence ID" value="NM_116735.4"/>
</dbReference>
<dbReference type="SMR" id="Q9S9U1"/>
<dbReference type="FunCoup" id="Q9S9U1">
    <property type="interactions" value="197"/>
</dbReference>
<dbReference type="STRING" id="3702.Q9S9U1"/>
<dbReference type="GlyCosmos" id="Q9S9U1">
    <property type="glycosylation" value="10 sites, No reported glycans"/>
</dbReference>
<dbReference type="GlyGen" id="Q9S9U1">
    <property type="glycosylation" value="10 sites"/>
</dbReference>
<dbReference type="PaxDb" id="3702-AT4G04960.1"/>
<dbReference type="ProteomicsDB" id="238676"/>
<dbReference type="EnsemblPlants" id="AT4G04960.1">
    <property type="protein sequence ID" value="AT4G04960.1"/>
    <property type="gene ID" value="AT4G04960"/>
</dbReference>
<dbReference type="GeneID" id="825837"/>
<dbReference type="Gramene" id="AT4G04960.1">
    <property type="protein sequence ID" value="AT4G04960.1"/>
    <property type="gene ID" value="AT4G04960"/>
</dbReference>
<dbReference type="KEGG" id="ath:AT4G04960"/>
<dbReference type="Araport" id="AT4G04960"/>
<dbReference type="TAIR" id="AT4G04960">
    <property type="gene designation" value="LECRK-VII.1"/>
</dbReference>
<dbReference type="eggNOG" id="ENOG502QRZ3">
    <property type="taxonomic scope" value="Eukaryota"/>
</dbReference>
<dbReference type="HOGENOM" id="CLU_000288_62_3_1"/>
<dbReference type="InParanoid" id="Q9S9U1"/>
<dbReference type="PhylomeDB" id="Q9S9U1"/>
<dbReference type="PRO" id="PR:Q9S9U1"/>
<dbReference type="Proteomes" id="UP000006548">
    <property type="component" value="Chromosome 4"/>
</dbReference>
<dbReference type="ExpressionAtlas" id="Q9S9U1">
    <property type="expression patterns" value="baseline and differential"/>
</dbReference>
<dbReference type="GO" id="GO:0005886">
    <property type="term" value="C:plasma membrane"/>
    <property type="evidence" value="ECO:0000250"/>
    <property type="project" value="UniProtKB"/>
</dbReference>
<dbReference type="GO" id="GO:0005524">
    <property type="term" value="F:ATP binding"/>
    <property type="evidence" value="ECO:0007669"/>
    <property type="project" value="UniProtKB-KW"/>
</dbReference>
<dbReference type="GO" id="GO:0030246">
    <property type="term" value="F:carbohydrate binding"/>
    <property type="evidence" value="ECO:0007669"/>
    <property type="project" value="UniProtKB-KW"/>
</dbReference>
<dbReference type="GO" id="GO:0106310">
    <property type="term" value="F:protein serine kinase activity"/>
    <property type="evidence" value="ECO:0007669"/>
    <property type="project" value="RHEA"/>
</dbReference>
<dbReference type="GO" id="GO:0004674">
    <property type="term" value="F:protein serine/threonine kinase activity"/>
    <property type="evidence" value="ECO:0007669"/>
    <property type="project" value="UniProtKB-KW"/>
</dbReference>
<dbReference type="CDD" id="cd06899">
    <property type="entry name" value="lectin_legume_LecRK_Arcelin_ConA"/>
    <property type="match status" value="1"/>
</dbReference>
<dbReference type="CDD" id="cd14066">
    <property type="entry name" value="STKc_IRAK"/>
    <property type="match status" value="1"/>
</dbReference>
<dbReference type="FunFam" id="1.10.510.10:FF:000108">
    <property type="entry name" value="L-type lectin-domain containing receptor kinase S.4"/>
    <property type="match status" value="1"/>
</dbReference>
<dbReference type="FunFam" id="2.60.120.200:FF:000086">
    <property type="entry name" value="L-type lectin-domain containing receptor kinase S.4"/>
    <property type="match status" value="1"/>
</dbReference>
<dbReference type="FunFam" id="3.30.200.20:FF:000621">
    <property type="entry name" value="Putative L-type lectin-domain containing receptor kinase VII.2"/>
    <property type="match status" value="1"/>
</dbReference>
<dbReference type="Gene3D" id="2.60.120.200">
    <property type="match status" value="1"/>
</dbReference>
<dbReference type="Gene3D" id="3.30.200.20">
    <property type="entry name" value="Phosphorylase Kinase, domain 1"/>
    <property type="match status" value="1"/>
</dbReference>
<dbReference type="Gene3D" id="1.10.510.10">
    <property type="entry name" value="Transferase(Phosphotransferase) domain 1"/>
    <property type="match status" value="1"/>
</dbReference>
<dbReference type="InterPro" id="IPR013320">
    <property type="entry name" value="ConA-like_dom_sf"/>
</dbReference>
<dbReference type="InterPro" id="IPR011009">
    <property type="entry name" value="Kinase-like_dom_sf"/>
</dbReference>
<dbReference type="InterPro" id="IPR050528">
    <property type="entry name" value="L-type_Lectin-RKs"/>
</dbReference>
<dbReference type="InterPro" id="IPR001220">
    <property type="entry name" value="Legume_lectin_dom"/>
</dbReference>
<dbReference type="InterPro" id="IPR000719">
    <property type="entry name" value="Prot_kinase_dom"/>
</dbReference>
<dbReference type="InterPro" id="IPR017441">
    <property type="entry name" value="Protein_kinase_ATP_BS"/>
</dbReference>
<dbReference type="InterPro" id="IPR008271">
    <property type="entry name" value="Ser/Thr_kinase_AS"/>
</dbReference>
<dbReference type="PANTHER" id="PTHR27007">
    <property type="match status" value="1"/>
</dbReference>
<dbReference type="Pfam" id="PF00139">
    <property type="entry name" value="Lectin_legB"/>
    <property type="match status" value="1"/>
</dbReference>
<dbReference type="Pfam" id="PF00069">
    <property type="entry name" value="Pkinase"/>
    <property type="match status" value="1"/>
</dbReference>
<dbReference type="SMART" id="SM00220">
    <property type="entry name" value="S_TKc"/>
    <property type="match status" value="1"/>
</dbReference>
<dbReference type="SUPFAM" id="SSF49899">
    <property type="entry name" value="Concanavalin A-like lectins/glucanases"/>
    <property type="match status" value="1"/>
</dbReference>
<dbReference type="SUPFAM" id="SSF56112">
    <property type="entry name" value="Protein kinase-like (PK-like)"/>
    <property type="match status" value="1"/>
</dbReference>
<dbReference type="PROSITE" id="PS00107">
    <property type="entry name" value="PROTEIN_KINASE_ATP"/>
    <property type="match status" value="1"/>
</dbReference>
<dbReference type="PROSITE" id="PS50011">
    <property type="entry name" value="PROTEIN_KINASE_DOM"/>
    <property type="match status" value="1"/>
</dbReference>
<dbReference type="PROSITE" id="PS00108">
    <property type="entry name" value="PROTEIN_KINASE_ST"/>
    <property type="match status" value="1"/>
</dbReference>
<evidence type="ECO:0000250" key="1"/>
<evidence type="ECO:0000255" key="2"/>
<evidence type="ECO:0000255" key="3">
    <source>
        <dbReference type="PROSITE-ProRule" id="PRU00159"/>
    </source>
</evidence>
<evidence type="ECO:0000255" key="4">
    <source>
        <dbReference type="PROSITE-ProRule" id="PRU10027"/>
    </source>
</evidence>
<evidence type="ECO:0000305" key="5"/>
<feature type="signal peptide" evidence="2">
    <location>
        <begin position="1"/>
        <end position="20"/>
    </location>
</feature>
<feature type="chain" id="PRO_0000403099" description="L-type lectin-domain containing receptor kinase VII.1">
    <location>
        <begin position="21"/>
        <end position="686"/>
    </location>
</feature>
<feature type="topological domain" description="Extracellular" evidence="2">
    <location>
        <begin position="21"/>
        <end position="286"/>
    </location>
</feature>
<feature type="transmembrane region" description="Helical" evidence="2">
    <location>
        <begin position="287"/>
        <end position="307"/>
    </location>
</feature>
<feature type="topological domain" description="Cytoplasmic" evidence="2">
    <location>
        <begin position="308"/>
        <end position="686"/>
    </location>
</feature>
<feature type="domain" description="Protein kinase" evidence="3">
    <location>
        <begin position="347"/>
        <end position="628"/>
    </location>
</feature>
<feature type="region of interest" description="Legume-lectin like">
    <location>
        <begin position="21"/>
        <end position="256"/>
    </location>
</feature>
<feature type="active site" description="Proton acceptor" evidence="3 4">
    <location>
        <position position="475"/>
    </location>
</feature>
<feature type="binding site" evidence="3">
    <location>
        <begin position="353"/>
        <end position="361"/>
    </location>
    <ligand>
        <name>ATP</name>
        <dbReference type="ChEBI" id="CHEBI:30616"/>
    </ligand>
</feature>
<feature type="binding site" evidence="3">
    <location>
        <position position="376"/>
    </location>
    <ligand>
        <name>ATP</name>
        <dbReference type="ChEBI" id="CHEBI:30616"/>
    </ligand>
</feature>
<feature type="glycosylation site" description="N-linked (GlcNAc...) asparagine" evidence="2">
    <location>
        <position position="29"/>
    </location>
</feature>
<feature type="glycosylation site" description="N-linked (GlcNAc...) asparagine" evidence="2">
    <location>
        <position position="34"/>
    </location>
</feature>
<feature type="glycosylation site" description="N-linked (GlcNAc...) asparagine" evidence="2">
    <location>
        <position position="52"/>
    </location>
</feature>
<feature type="glycosylation site" description="N-linked (GlcNAc...) asparagine" evidence="2">
    <location>
        <position position="64"/>
    </location>
</feature>
<feature type="glycosylation site" description="N-linked (GlcNAc...) asparagine" evidence="2">
    <location>
        <position position="111"/>
    </location>
</feature>
<feature type="glycosylation site" description="N-linked (GlcNAc...) asparagine" evidence="2">
    <location>
        <position position="123"/>
    </location>
</feature>
<feature type="glycosylation site" description="N-linked (GlcNAc...) asparagine" evidence="2">
    <location>
        <position position="168"/>
    </location>
</feature>
<feature type="glycosylation site" description="N-linked (GlcNAc...) asparagine" evidence="2">
    <location>
        <position position="203"/>
    </location>
</feature>
<feature type="glycosylation site" description="N-linked (GlcNAc...) asparagine" evidence="2">
    <location>
        <position position="224"/>
    </location>
</feature>
<feature type="glycosylation site" description="N-linked (GlcNAc...) asparagine" evidence="2">
    <location>
        <position position="259"/>
    </location>
</feature>
<feature type="sequence conflict" description="In Ref. 3; AAP40475 and 4; BAF01352." evidence="5" ref="3 4">
    <original>S</original>
    <variation>R</variation>
    <location>
        <position position="445"/>
    </location>
</feature>
<proteinExistence type="evidence at transcript level"/>
<accession>Q9S9U1</accession>
<accession>Q56WH7</accession>
<accession>Q7Y206</accession>
<name>LRK71_ARATH</name>